<sequence length="122" mass="12479">MALTNEDIINAVSEMSVMQVVELIKAMEEKFGVTAAAATVAAAGPAAAAAEEQTEFTIVLAEAGDKKVNVIKVVRELTGLGLKEAKAVVDGAPGVVKEGASKEEAEAAKKALEEAGAKVELK</sequence>
<dbReference type="EMBL" id="AE004091">
    <property type="protein sequence ID" value="AAG07659.1"/>
    <property type="molecule type" value="Genomic_DNA"/>
</dbReference>
<dbReference type="PIR" id="H83110">
    <property type="entry name" value="H83110"/>
</dbReference>
<dbReference type="RefSeq" id="NP_252961.1">
    <property type="nucleotide sequence ID" value="NC_002516.2"/>
</dbReference>
<dbReference type="RefSeq" id="WP_003093747.1">
    <property type="nucleotide sequence ID" value="NZ_QZGE01000028.1"/>
</dbReference>
<dbReference type="SMR" id="Q9HWC8"/>
<dbReference type="FunCoup" id="Q9HWC8">
    <property type="interactions" value="913"/>
</dbReference>
<dbReference type="STRING" id="208964.PA4271"/>
<dbReference type="PaxDb" id="208964-PA4271"/>
<dbReference type="DNASU" id="881701"/>
<dbReference type="GeneID" id="77219190"/>
<dbReference type="GeneID" id="881701"/>
<dbReference type="KEGG" id="pae:PA4271"/>
<dbReference type="PATRIC" id="fig|208964.12.peg.4472"/>
<dbReference type="PseudoCAP" id="PA4271"/>
<dbReference type="HOGENOM" id="CLU_086499_3_2_6"/>
<dbReference type="InParanoid" id="Q9HWC8"/>
<dbReference type="OrthoDB" id="9811748at2"/>
<dbReference type="PhylomeDB" id="Q9HWC8"/>
<dbReference type="BioCyc" id="PAER208964:G1FZ6-4345-MONOMER"/>
<dbReference type="PRO" id="PR:Q9HWC8"/>
<dbReference type="Proteomes" id="UP000002438">
    <property type="component" value="Chromosome"/>
</dbReference>
<dbReference type="GO" id="GO:0022625">
    <property type="term" value="C:cytosolic large ribosomal subunit"/>
    <property type="evidence" value="ECO:0000318"/>
    <property type="project" value="GO_Central"/>
</dbReference>
<dbReference type="GO" id="GO:0003729">
    <property type="term" value="F:mRNA binding"/>
    <property type="evidence" value="ECO:0000318"/>
    <property type="project" value="GO_Central"/>
</dbReference>
<dbReference type="GO" id="GO:0003735">
    <property type="term" value="F:structural constituent of ribosome"/>
    <property type="evidence" value="ECO:0000318"/>
    <property type="project" value="GO_Central"/>
</dbReference>
<dbReference type="GO" id="GO:0006412">
    <property type="term" value="P:translation"/>
    <property type="evidence" value="ECO:0000318"/>
    <property type="project" value="GO_Central"/>
</dbReference>
<dbReference type="CDD" id="cd00387">
    <property type="entry name" value="Ribosomal_L7_L12"/>
    <property type="match status" value="1"/>
</dbReference>
<dbReference type="FunFam" id="1.20.5.710:FF:000003">
    <property type="entry name" value="50S ribosomal protein L7/L12"/>
    <property type="match status" value="1"/>
</dbReference>
<dbReference type="FunFam" id="3.30.1390.10:FF:000001">
    <property type="entry name" value="50S ribosomal protein L7/L12"/>
    <property type="match status" value="1"/>
</dbReference>
<dbReference type="Gene3D" id="3.30.1390.10">
    <property type="match status" value="1"/>
</dbReference>
<dbReference type="Gene3D" id="1.20.5.710">
    <property type="entry name" value="Single helix bin"/>
    <property type="match status" value="1"/>
</dbReference>
<dbReference type="HAMAP" id="MF_00368">
    <property type="entry name" value="Ribosomal_bL12"/>
    <property type="match status" value="1"/>
</dbReference>
<dbReference type="InterPro" id="IPR000206">
    <property type="entry name" value="Ribosomal_bL12"/>
</dbReference>
<dbReference type="InterPro" id="IPR013823">
    <property type="entry name" value="Ribosomal_bL12_C"/>
</dbReference>
<dbReference type="InterPro" id="IPR014719">
    <property type="entry name" value="Ribosomal_bL12_C/ClpS-like"/>
</dbReference>
<dbReference type="InterPro" id="IPR008932">
    <property type="entry name" value="Ribosomal_bL12_oligo"/>
</dbReference>
<dbReference type="InterPro" id="IPR036235">
    <property type="entry name" value="Ribosomal_bL12_oligo_N_sf"/>
</dbReference>
<dbReference type="NCBIfam" id="TIGR00855">
    <property type="entry name" value="L12"/>
    <property type="match status" value="1"/>
</dbReference>
<dbReference type="PANTHER" id="PTHR45987">
    <property type="entry name" value="39S RIBOSOMAL PROTEIN L12"/>
    <property type="match status" value="1"/>
</dbReference>
<dbReference type="PANTHER" id="PTHR45987:SF4">
    <property type="entry name" value="LARGE RIBOSOMAL SUBUNIT PROTEIN BL12M"/>
    <property type="match status" value="1"/>
</dbReference>
<dbReference type="Pfam" id="PF00542">
    <property type="entry name" value="Ribosomal_L12"/>
    <property type="match status" value="1"/>
</dbReference>
<dbReference type="Pfam" id="PF16320">
    <property type="entry name" value="Ribosomal_L12_N"/>
    <property type="match status" value="1"/>
</dbReference>
<dbReference type="SUPFAM" id="SSF54736">
    <property type="entry name" value="ClpS-like"/>
    <property type="match status" value="1"/>
</dbReference>
<dbReference type="SUPFAM" id="SSF48300">
    <property type="entry name" value="Ribosomal protein L7/12, oligomerisation (N-terminal) domain"/>
    <property type="match status" value="1"/>
</dbReference>
<proteinExistence type="inferred from homology"/>
<evidence type="ECO:0000255" key="1">
    <source>
        <dbReference type="HAMAP-Rule" id="MF_00368"/>
    </source>
</evidence>
<evidence type="ECO:0000305" key="2"/>
<feature type="chain" id="PRO_0000157561" description="Large ribosomal subunit protein bL12">
    <location>
        <begin position="1"/>
        <end position="122"/>
    </location>
</feature>
<keyword id="KW-1185">Reference proteome</keyword>
<keyword id="KW-0687">Ribonucleoprotein</keyword>
<keyword id="KW-0689">Ribosomal protein</keyword>
<organism>
    <name type="scientific">Pseudomonas aeruginosa (strain ATCC 15692 / DSM 22644 / CIP 104116 / JCM 14847 / LMG 12228 / 1C / PRS 101 / PAO1)</name>
    <dbReference type="NCBI Taxonomy" id="208964"/>
    <lineage>
        <taxon>Bacteria</taxon>
        <taxon>Pseudomonadati</taxon>
        <taxon>Pseudomonadota</taxon>
        <taxon>Gammaproteobacteria</taxon>
        <taxon>Pseudomonadales</taxon>
        <taxon>Pseudomonadaceae</taxon>
        <taxon>Pseudomonas</taxon>
    </lineage>
</organism>
<name>RL7_PSEAE</name>
<accession>Q9HWC8</accession>
<reference key="1">
    <citation type="journal article" date="2000" name="Nature">
        <title>Complete genome sequence of Pseudomonas aeruginosa PAO1, an opportunistic pathogen.</title>
        <authorList>
            <person name="Stover C.K."/>
            <person name="Pham X.-Q.T."/>
            <person name="Erwin A.L."/>
            <person name="Mizoguchi S.D."/>
            <person name="Warrener P."/>
            <person name="Hickey M.J."/>
            <person name="Brinkman F.S.L."/>
            <person name="Hufnagle W.O."/>
            <person name="Kowalik D.J."/>
            <person name="Lagrou M."/>
            <person name="Garber R.L."/>
            <person name="Goltry L."/>
            <person name="Tolentino E."/>
            <person name="Westbrock-Wadman S."/>
            <person name="Yuan Y."/>
            <person name="Brody L.L."/>
            <person name="Coulter S.N."/>
            <person name="Folger K.R."/>
            <person name="Kas A."/>
            <person name="Larbig K."/>
            <person name="Lim R.M."/>
            <person name="Smith K.A."/>
            <person name="Spencer D.H."/>
            <person name="Wong G.K.-S."/>
            <person name="Wu Z."/>
            <person name="Paulsen I.T."/>
            <person name="Reizer J."/>
            <person name="Saier M.H. Jr."/>
            <person name="Hancock R.E.W."/>
            <person name="Lory S."/>
            <person name="Olson M.V."/>
        </authorList>
    </citation>
    <scope>NUCLEOTIDE SEQUENCE [LARGE SCALE GENOMIC DNA]</scope>
    <source>
        <strain>ATCC 15692 / DSM 22644 / CIP 104116 / JCM 14847 / LMG 12228 / 1C / PRS 101 / PAO1</strain>
    </source>
</reference>
<comment type="function">
    <text evidence="1">Forms part of the ribosomal stalk which helps the ribosome interact with GTP-bound translation factors. Is thus essential for accurate translation.</text>
</comment>
<comment type="subunit">
    <text evidence="1">Homodimer. Part of the ribosomal stalk of the 50S ribosomal subunit. Forms a multimeric L10(L12)X complex, where L10 forms an elongated spine to which 2 to 4 L12 dimers bind in a sequential fashion. Binds GTP-bound translation factors.</text>
</comment>
<comment type="similarity">
    <text evidence="1">Belongs to the bacterial ribosomal protein bL12 family.</text>
</comment>
<protein>
    <recommendedName>
        <fullName evidence="1">Large ribosomal subunit protein bL12</fullName>
    </recommendedName>
    <alternativeName>
        <fullName evidence="2">50S ribosomal protein L7/L12</fullName>
    </alternativeName>
</protein>
<gene>
    <name evidence="1" type="primary">rplL</name>
    <name type="ordered locus">PA4271</name>
</gene>